<reference key="1">
    <citation type="journal article" date="1993" name="J. Gen. Microbiol.">
        <title>Cloning, nucleotide sequence and expression in Streptomyces lividans and Escherichia coli of pabB from Lactococcus lactis subsp. lactis NCDO 496.</title>
        <authorList>
            <person name="Arhin F.F."/>
            <person name="Vining L.C."/>
        </authorList>
    </citation>
    <scope>NUCLEOTIDE SEQUENCE [GENOMIC DNA]</scope>
    <source>
        <strain>ATCC 11454 / DSM 20729 / LMG 7930 / NCDO 496 / NCIMB 8586 / Berridge X 13</strain>
    </source>
</reference>
<sequence>MFTISGVVLITRPVYDEGSLNYCQSGAMNNGILLESVEGNKPRYSIGGAEPIGTINANAVLTAATYAEDVKFTDADPLNGTRVAICNGEDTQQEEMGFQGGALGYFAYDVGRRLEGYNDLGIEDWAIPDLAGSSYEIGVSADHQNDVIVLIAHASADGNDVFITSSRQLSMVAGPTCCASGDVEILRNKLHYYGVIPFSQDDCGFNRLKDYLGSGDMYQVNLGNRNVGAIVMTLFQGYNQLRLMNPGPYMVFLDEANIIMASPEIVLADEANDLNTRPIAGTLMRLNEQDEDGVNAACLGQHHKDRAEHMMIVDLVRNDLGRVGRFGSVNVQEIVGAENYSVVMHIVSRVTGSLNEAFEAMEIIRAGFPGGSITGAPKVRAMEIIEELEPQRRDGWGGSIGYIAYRGNIGYRIAIRTLFACNGQLFASSGAGLVGDSMEDGEYNETFEKMRALRSFFCAAVHMGKTPYLS</sequence>
<feature type="chain" id="PRO_0000154138" description="Aminodeoxychorismate synthase component 1">
    <location>
        <begin position="1"/>
        <end position="470"/>
    </location>
</feature>
<dbReference type="EC" id="2.6.1.85"/>
<dbReference type="EMBL" id="M64860">
    <property type="protein sequence ID" value="AAA17025.1"/>
    <property type="molecule type" value="Unassigned_DNA"/>
</dbReference>
<dbReference type="SMR" id="P27629"/>
<dbReference type="UniPathway" id="UPA00077">
    <property type="reaction ID" value="UER00149"/>
</dbReference>
<dbReference type="GO" id="GO:0046820">
    <property type="term" value="F:4-amino-4-deoxychorismate synthase activity"/>
    <property type="evidence" value="ECO:0000250"/>
    <property type="project" value="UniProtKB"/>
</dbReference>
<dbReference type="GO" id="GO:0000287">
    <property type="term" value="F:magnesium ion binding"/>
    <property type="evidence" value="ECO:0000250"/>
    <property type="project" value="UniProtKB"/>
</dbReference>
<dbReference type="GO" id="GO:0046656">
    <property type="term" value="P:folic acid biosynthetic process"/>
    <property type="evidence" value="ECO:0007669"/>
    <property type="project" value="UniProtKB-KW"/>
</dbReference>
<dbReference type="GO" id="GO:0000162">
    <property type="term" value="P:L-tryptophan biosynthetic process"/>
    <property type="evidence" value="ECO:0007669"/>
    <property type="project" value="TreeGrafter"/>
</dbReference>
<dbReference type="GO" id="GO:0046654">
    <property type="term" value="P:tetrahydrofolate biosynthetic process"/>
    <property type="evidence" value="ECO:0000250"/>
    <property type="project" value="UniProtKB"/>
</dbReference>
<dbReference type="Gene3D" id="3.60.120.10">
    <property type="entry name" value="Anthranilate synthase"/>
    <property type="match status" value="1"/>
</dbReference>
<dbReference type="InterPro" id="IPR005801">
    <property type="entry name" value="ADC_synthase"/>
</dbReference>
<dbReference type="InterPro" id="IPR019999">
    <property type="entry name" value="Anth_synth_I-like"/>
</dbReference>
<dbReference type="InterPro" id="IPR006805">
    <property type="entry name" value="Anth_synth_I_N"/>
</dbReference>
<dbReference type="InterPro" id="IPR015890">
    <property type="entry name" value="Chorismate_C"/>
</dbReference>
<dbReference type="InterPro" id="IPR010118">
    <property type="entry name" value="Para-NH2Bz/anthranilate_synth"/>
</dbReference>
<dbReference type="NCBIfam" id="TIGR01824">
    <property type="entry name" value="PabB-clade2"/>
    <property type="match status" value="1"/>
</dbReference>
<dbReference type="PANTHER" id="PTHR11236">
    <property type="entry name" value="AMINOBENZOATE/ANTHRANILATE SYNTHASE"/>
    <property type="match status" value="1"/>
</dbReference>
<dbReference type="PANTHER" id="PTHR11236:SF50">
    <property type="entry name" value="AMINODEOXYCHORISMATE SYNTHASE COMPONENT 1"/>
    <property type="match status" value="1"/>
</dbReference>
<dbReference type="Pfam" id="PF04715">
    <property type="entry name" value="Anth_synt_I_N"/>
    <property type="match status" value="1"/>
</dbReference>
<dbReference type="Pfam" id="PF00425">
    <property type="entry name" value="Chorismate_bind"/>
    <property type="match status" value="1"/>
</dbReference>
<dbReference type="PRINTS" id="PR00095">
    <property type="entry name" value="ANTSNTHASEI"/>
</dbReference>
<dbReference type="SUPFAM" id="SSF56322">
    <property type="entry name" value="ADC synthase"/>
    <property type="match status" value="1"/>
</dbReference>
<name>PABB_LACLL</name>
<proteinExistence type="inferred from homology"/>
<evidence type="ECO:0000250" key="1"/>
<evidence type="ECO:0000305" key="2"/>
<comment type="function">
    <text evidence="1">Part of a heterodimeric complex that catalyzes the two-step biosynthesis of 4-amino-4-deoxychorismate (ADC), a precursor of p-aminobenzoate (PABA) and tetrahydrofolate. In the first step, a glutamine amidotransferase (PabA) generates ammonia as a substrate that, along with chorismate, is used in the second step, catalyzed by aminodeoxychorismate synthase (PabB) to produce ADC (By similarity).</text>
</comment>
<comment type="catalytic activity">
    <reaction>
        <text>chorismate + L-glutamine = 4-amino-4-deoxychorismate + L-glutamate</text>
        <dbReference type="Rhea" id="RHEA:11672"/>
        <dbReference type="ChEBI" id="CHEBI:29748"/>
        <dbReference type="ChEBI" id="CHEBI:29985"/>
        <dbReference type="ChEBI" id="CHEBI:58359"/>
        <dbReference type="ChEBI" id="CHEBI:58406"/>
        <dbReference type="EC" id="2.6.1.85"/>
    </reaction>
</comment>
<comment type="cofactor">
    <cofactor evidence="1">
        <name>Mg(2+)</name>
        <dbReference type="ChEBI" id="CHEBI:18420"/>
    </cofactor>
</comment>
<comment type="pathway">
    <text>Cofactor biosynthesis; tetrahydrofolate biosynthesis; 4-aminobenzoate from chorismate: step 1/2.</text>
</comment>
<comment type="subunit">
    <text evidence="1">Monomer. Heterodimer consisting of two non-identical subunits: a glutamine amidotransferase subunit (PabA) and a aminodeoxychorismate synthase subunit (PabB) (By similarity).</text>
</comment>
<comment type="miscellaneous">
    <text>The catalytically active amino acid residue K274 of the E.coli enzyme is missing.</text>
</comment>
<comment type="similarity">
    <text evidence="2">Belongs to the anthranilate synthase component I family.</text>
</comment>
<gene>
    <name type="primary">pabB</name>
</gene>
<protein>
    <recommendedName>
        <fullName>Aminodeoxychorismate synthase component 1</fullName>
        <shortName>ADC synthase</shortName>
        <shortName>ADCS</shortName>
        <ecNumber>2.6.1.85</ecNumber>
    </recommendedName>
    <alternativeName>
        <fullName>4-amino-4-deoxychorismate synthase component 1</fullName>
    </alternativeName>
</protein>
<keyword id="KW-0289">Folate biosynthesis</keyword>
<keyword id="KW-0460">Magnesium</keyword>
<keyword id="KW-0808">Transferase</keyword>
<organism>
    <name type="scientific">Lactococcus lactis subsp. lactis</name>
    <name type="common">Streptococcus lactis</name>
    <dbReference type="NCBI Taxonomy" id="1360"/>
    <lineage>
        <taxon>Bacteria</taxon>
        <taxon>Bacillati</taxon>
        <taxon>Bacillota</taxon>
        <taxon>Bacilli</taxon>
        <taxon>Lactobacillales</taxon>
        <taxon>Streptococcaceae</taxon>
        <taxon>Lactococcus</taxon>
    </lineage>
</organism>
<accession>P27629</accession>